<keyword id="KW-0378">Hydrolase</keyword>
<keyword id="KW-1185">Reference proteome</keyword>
<proteinExistence type="inferred from homology"/>
<feature type="chain" id="PRO_1000215392" description="GTP cyclohydrolase FolE2">
    <location>
        <begin position="1"/>
        <end position="257"/>
    </location>
</feature>
<feature type="site" description="May be catalytically important" evidence="1">
    <location>
        <position position="144"/>
    </location>
</feature>
<evidence type="ECO:0000255" key="1">
    <source>
        <dbReference type="HAMAP-Rule" id="MF_01527"/>
    </source>
</evidence>
<accession>C5CEC0</accession>
<organism>
    <name type="scientific">Kosmotoga olearia (strain ATCC BAA-1733 / DSM 21960 / TBF 19.5.1)</name>
    <dbReference type="NCBI Taxonomy" id="521045"/>
    <lineage>
        <taxon>Bacteria</taxon>
        <taxon>Thermotogati</taxon>
        <taxon>Thermotogota</taxon>
        <taxon>Thermotogae</taxon>
        <taxon>Kosmotogales</taxon>
        <taxon>Kosmotogaceae</taxon>
        <taxon>Kosmotoga</taxon>
    </lineage>
</organism>
<dbReference type="EC" id="3.5.4.16" evidence="1"/>
<dbReference type="EMBL" id="CP001634">
    <property type="protein sequence ID" value="ACR80160.1"/>
    <property type="molecule type" value="Genomic_DNA"/>
</dbReference>
<dbReference type="RefSeq" id="WP_015868807.1">
    <property type="nucleotide sequence ID" value="NC_012785.1"/>
</dbReference>
<dbReference type="SMR" id="C5CEC0"/>
<dbReference type="STRING" id="521045.Kole_1468"/>
<dbReference type="KEGG" id="kol:Kole_1468"/>
<dbReference type="eggNOG" id="COG1469">
    <property type="taxonomic scope" value="Bacteria"/>
</dbReference>
<dbReference type="HOGENOM" id="CLU_062816_1_1_0"/>
<dbReference type="UniPathway" id="UPA00848">
    <property type="reaction ID" value="UER00151"/>
</dbReference>
<dbReference type="Proteomes" id="UP000002382">
    <property type="component" value="Chromosome"/>
</dbReference>
<dbReference type="GO" id="GO:0003934">
    <property type="term" value="F:GTP cyclohydrolase I activity"/>
    <property type="evidence" value="ECO:0007669"/>
    <property type="project" value="UniProtKB-UniRule"/>
</dbReference>
<dbReference type="GO" id="GO:0046654">
    <property type="term" value="P:tetrahydrofolate biosynthetic process"/>
    <property type="evidence" value="ECO:0007669"/>
    <property type="project" value="UniProtKB-UniRule"/>
</dbReference>
<dbReference type="Gene3D" id="3.10.270.10">
    <property type="entry name" value="Urate Oxidase"/>
    <property type="match status" value="1"/>
</dbReference>
<dbReference type="HAMAP" id="MF_01527_B">
    <property type="entry name" value="GTP_cyclohydrol_B"/>
    <property type="match status" value="1"/>
</dbReference>
<dbReference type="InterPro" id="IPR022838">
    <property type="entry name" value="GTP_cyclohydrolase_FolE2"/>
</dbReference>
<dbReference type="InterPro" id="IPR003801">
    <property type="entry name" value="GTP_cyclohydrolase_FolE2/MptA"/>
</dbReference>
<dbReference type="NCBIfam" id="NF010200">
    <property type="entry name" value="PRK13674.1-1"/>
    <property type="match status" value="1"/>
</dbReference>
<dbReference type="PANTHER" id="PTHR36445">
    <property type="entry name" value="GTP CYCLOHYDROLASE MPTA"/>
    <property type="match status" value="1"/>
</dbReference>
<dbReference type="PANTHER" id="PTHR36445:SF1">
    <property type="entry name" value="GTP CYCLOHYDROLASE MPTA"/>
    <property type="match status" value="1"/>
</dbReference>
<dbReference type="Pfam" id="PF02649">
    <property type="entry name" value="GCHY-1"/>
    <property type="match status" value="1"/>
</dbReference>
<comment type="function">
    <text evidence="1">Converts GTP to 7,8-dihydroneopterin triphosphate.</text>
</comment>
<comment type="catalytic activity">
    <reaction evidence="1">
        <text>GTP + H2O = 7,8-dihydroneopterin 3'-triphosphate + formate + H(+)</text>
        <dbReference type="Rhea" id="RHEA:17473"/>
        <dbReference type="ChEBI" id="CHEBI:15377"/>
        <dbReference type="ChEBI" id="CHEBI:15378"/>
        <dbReference type="ChEBI" id="CHEBI:15740"/>
        <dbReference type="ChEBI" id="CHEBI:37565"/>
        <dbReference type="ChEBI" id="CHEBI:58462"/>
        <dbReference type="EC" id="3.5.4.16"/>
    </reaction>
</comment>
<comment type="pathway">
    <text evidence="1">Cofactor biosynthesis; 7,8-dihydroneopterin triphosphate biosynthesis; 7,8-dihydroneopterin triphosphate from GTP: step 1/1.</text>
</comment>
<comment type="similarity">
    <text evidence="1">Belongs to the GTP cyclohydrolase IV family.</text>
</comment>
<gene>
    <name evidence="1" type="primary">folE2</name>
    <name type="ordered locus">Kole_1468</name>
</gene>
<protein>
    <recommendedName>
        <fullName evidence="1">GTP cyclohydrolase FolE2</fullName>
        <ecNumber evidence="1">3.5.4.16</ecNumber>
    </recommendedName>
</protein>
<name>GCH4_KOSOT</name>
<sequence>MRDVQSEKDHRNIPINMVGIKGLKYPIIVMDRTNKRQHTIGTFNLFVDLPKDFRGTHMSRFVEVLDRHNMKVTPKNMESILDDMREALKATVAHVTVDFPYFIRKNAPISGIGSYSSYNCGFISTKNKEFDFILKVEVPVLTVCPCSKEISDRGAHNQRAMVNVQVRMNSLVWIEEIIEMVEDAASAPIFTLLKREDEKFITEVSYDNPRFVEDVSREVVLRFMNDPRISWYRVEVSSQESIHNHEAYACIEKGKSL</sequence>
<reference key="1">
    <citation type="submission" date="2009-06" db="EMBL/GenBank/DDBJ databases">
        <title>Complete sequence of Thermotogales bacterium TBF 19.5.1.</title>
        <authorList>
            <consortium name="US DOE Joint Genome Institute"/>
            <person name="Lucas S."/>
            <person name="Copeland A."/>
            <person name="Lapidus A."/>
            <person name="Glavina del Rio T."/>
            <person name="Tice H."/>
            <person name="Bruce D."/>
            <person name="Goodwin L."/>
            <person name="Pitluck S."/>
            <person name="Chertkov O."/>
            <person name="Brettin T."/>
            <person name="Detter J.C."/>
            <person name="Han C."/>
            <person name="Schmutz J."/>
            <person name="Larimer F."/>
            <person name="Land M."/>
            <person name="Hauser L."/>
            <person name="Kyrpides N."/>
            <person name="Ovchinnikova G."/>
            <person name="Noll K."/>
        </authorList>
    </citation>
    <scope>NUCLEOTIDE SEQUENCE [LARGE SCALE GENOMIC DNA]</scope>
    <source>
        <strain>ATCC BAA-1733 / DSM 21960 / TBF 19.5.1</strain>
    </source>
</reference>